<protein>
    <recommendedName>
        <fullName>Nucleoprotein</fullName>
    </recommendedName>
    <alternativeName>
        <fullName>Nucleocapsid protein</fullName>
        <shortName>Protein N</shortName>
    </alternativeName>
</protein>
<name>NCAP_SBVBH</name>
<sequence length="233" mass="26181">MSSQFIFEDVPQRNAATFNPEVGYVAFIGKYGQQLNFGVARVFFLNQKKAKMVLHKTAQPSVDLTFGGVKFTVVNNHFPQYVSNPVPDNAITLHRMSGYLARWIADTCKASVLKLAEASAQIVMPLAEVKGCTWADGYTMYLGFAPGAEMFLDAFDFYPLVIEMHRVLKDNMDVNFMKKVLRQRYGTMTAEEWMTQKITEIKAAFNSVGQLAWAKSGFSPAARTFLQQFGINI</sequence>
<accession>H2AM13</accession>
<proteinExistence type="evidence at protein level"/>
<gene>
    <name type="primary">N</name>
</gene>
<feature type="chain" id="PRO_0000422475" description="Nucleoprotein">
    <location>
        <begin position="1"/>
        <end position="233"/>
    </location>
</feature>
<feature type="binding site" evidence="4 9">
    <location>
        <position position="12"/>
    </location>
    <ligand>
        <name>RNA</name>
        <dbReference type="ChEBI" id="CHEBI:33697"/>
    </ligand>
</feature>
<feature type="binding site" evidence="4 9">
    <location>
        <position position="15"/>
    </location>
    <ligand>
        <name>RNA</name>
        <dbReference type="ChEBI" id="CHEBI:33697"/>
    </ligand>
</feature>
<feature type="binding site" evidence="4 9">
    <location>
        <position position="16"/>
    </location>
    <ligand>
        <name>RNA</name>
        <dbReference type="ChEBI" id="CHEBI:33697"/>
    </ligand>
</feature>
<feature type="binding site" evidence="4 9">
    <location>
        <position position="48"/>
    </location>
    <ligand>
        <name>RNA</name>
        <dbReference type="ChEBI" id="CHEBI:33697"/>
    </ligand>
</feature>
<feature type="binding site" evidence="4 9">
    <location>
        <position position="51"/>
    </location>
    <ligand>
        <name>RNA</name>
        <dbReference type="ChEBI" id="CHEBI:33697"/>
    </ligand>
</feature>
<feature type="binding site" evidence="4 9">
    <location>
        <position position="77"/>
    </location>
    <ligand>
        <name>RNA</name>
        <dbReference type="ChEBI" id="CHEBI:33697"/>
    </ligand>
</feature>
<feature type="binding site" evidence="4 9">
    <location>
        <position position="95"/>
    </location>
    <ligand>
        <name>RNA</name>
        <dbReference type="ChEBI" id="CHEBI:33697"/>
    </ligand>
</feature>
<feature type="binding site" evidence="4 9">
    <location>
        <position position="166"/>
    </location>
    <ligand>
        <name>RNA</name>
        <dbReference type="ChEBI" id="CHEBI:33697"/>
    </ligand>
</feature>
<feature type="binding site" evidence="4 9">
    <location>
        <position position="178"/>
    </location>
    <ligand>
        <name>RNA</name>
        <dbReference type="ChEBI" id="CHEBI:33697"/>
    </ligand>
</feature>
<feature type="binding site" evidence="4 9">
    <location>
        <position position="179"/>
    </location>
    <ligand>
        <name>RNA</name>
        <dbReference type="ChEBI" id="CHEBI:33697"/>
    </ligand>
</feature>
<feature type="binding site" evidence="4 9">
    <location>
        <position position="182"/>
    </location>
    <ligand>
        <name>RNA</name>
        <dbReference type="ChEBI" id="CHEBI:33697"/>
    </ligand>
</feature>
<feature type="binding site" evidence="4 9">
    <location>
        <position position="184"/>
    </location>
    <ligand>
        <name>RNA</name>
        <dbReference type="ChEBI" id="CHEBI:33697"/>
    </ligand>
</feature>
<feature type="mutagenesis site" description="98% loss of RNA binding and RNA replication activities; when associted with Q-51." evidence="2">
    <original>R</original>
    <variation>G</variation>
    <location>
        <position position="41"/>
    </location>
</feature>
<feature type="mutagenesis site" description="99% loss of RNA binding and RNA replication activities." evidence="2">
    <original>K</original>
    <variation>E</variation>
    <location>
        <position position="48"/>
    </location>
</feature>
<feature type="mutagenesis site" description="98% loss of RNA binding and RNA replication activities; when associted with G-41." evidence="2">
    <original>K</original>
    <variation>Q</variation>
    <location>
        <position position="51"/>
    </location>
</feature>
<feature type="helix" evidence="11">
    <location>
        <begin position="20"/>
        <end position="31"/>
    </location>
</feature>
<feature type="helix" evidence="11">
    <location>
        <begin position="32"/>
        <end position="34"/>
    </location>
</feature>
<feature type="helix" evidence="11">
    <location>
        <begin position="37"/>
        <end position="45"/>
    </location>
</feature>
<feature type="helix" evidence="11">
    <location>
        <begin position="47"/>
        <end position="56"/>
    </location>
</feature>
<feature type="strand" evidence="11">
    <location>
        <begin position="59"/>
        <end position="66"/>
    </location>
</feature>
<feature type="strand" evidence="11">
    <location>
        <begin position="69"/>
        <end position="74"/>
    </location>
</feature>
<feature type="helix" evidence="11">
    <location>
        <begin position="79"/>
        <end position="81"/>
    </location>
</feature>
<feature type="helix" evidence="11">
    <location>
        <begin position="93"/>
        <end position="110"/>
    </location>
</feature>
<feature type="helix" evidence="11">
    <location>
        <begin position="112"/>
        <end position="121"/>
    </location>
</feature>
<feature type="turn" evidence="11">
    <location>
        <begin position="125"/>
        <end position="127"/>
    </location>
</feature>
<feature type="helix" evidence="11">
    <location>
        <begin position="128"/>
        <end position="130"/>
    </location>
</feature>
<feature type="helix" evidence="11">
    <location>
        <begin position="134"/>
        <end position="136"/>
    </location>
</feature>
<feature type="helix" evidence="11">
    <location>
        <begin position="138"/>
        <end position="142"/>
    </location>
</feature>
<feature type="helix" evidence="11">
    <location>
        <begin position="148"/>
        <end position="151"/>
    </location>
</feature>
<feature type="turn" evidence="11">
    <location>
        <begin position="152"/>
        <end position="157"/>
    </location>
</feature>
<feature type="helix" evidence="11">
    <location>
        <begin position="158"/>
        <end position="168"/>
    </location>
</feature>
<feature type="helix" evidence="11">
    <location>
        <begin position="177"/>
        <end position="181"/>
    </location>
</feature>
<feature type="strand" evidence="10">
    <location>
        <begin position="185"/>
        <end position="187"/>
    </location>
</feature>
<feature type="helix" evidence="11">
    <location>
        <begin position="190"/>
        <end position="196"/>
    </location>
</feature>
<feature type="helix" evidence="11">
    <location>
        <begin position="198"/>
        <end position="209"/>
    </location>
</feature>
<feature type="helix" evidence="11">
    <location>
        <begin position="222"/>
        <end position="225"/>
    </location>
</feature>
<feature type="turn" evidence="11">
    <location>
        <begin position="226"/>
        <end position="228"/>
    </location>
</feature>
<organismHost>
    <name type="scientific">Bos taurus</name>
    <name type="common">Bovine</name>
    <dbReference type="NCBI Taxonomy" id="9913"/>
</organismHost>
<organismHost>
    <name type="scientific">Ovis aries</name>
    <name type="common">Sheep</name>
    <dbReference type="NCBI Taxonomy" id="9940"/>
</organismHost>
<keyword id="KW-0002">3D-structure</keyword>
<keyword id="KW-0024">Alternative initiation</keyword>
<keyword id="KW-0687">Ribonucleoprotein</keyword>
<keyword id="KW-0694">RNA-binding</keyword>
<keyword id="KW-0543">Viral nucleoprotein</keyword>
<keyword id="KW-0946">Virion</keyword>
<organism>
    <name type="scientific">Bovine Schmallenberg virus (isolate Bovine/BH80/Germany/2011)</name>
    <name type="common">SBV</name>
    <dbReference type="NCBI Taxonomy" id="1318464"/>
    <lineage>
        <taxon>Viruses</taxon>
        <taxon>Riboviria</taxon>
        <taxon>Orthornavirae</taxon>
        <taxon>Negarnaviricota</taxon>
        <taxon>Polyploviricotina</taxon>
        <taxon>Ellioviricetes</taxon>
        <taxon>Bunyavirales</taxon>
        <taxon>Peribunyaviridae</taxon>
        <taxon>Orthobunyavirus</taxon>
        <taxon>Orthobunyavirus schmallenbergense</taxon>
    </lineage>
</organism>
<dbReference type="EMBL" id="JX853181">
    <property type="protein sequence ID" value="AGC84162.1"/>
    <property type="molecule type" value="Viral_cRNA"/>
</dbReference>
<dbReference type="EMBL" id="KC108842">
    <property type="protein sequence ID" value="AGC93537.1"/>
    <property type="molecule type" value="Viral_cRNA"/>
</dbReference>
<dbReference type="EMBL" id="KC108848">
    <property type="protein sequence ID" value="AGC93540.1"/>
    <property type="molecule type" value="Viral_cRNA"/>
</dbReference>
<dbReference type="EMBL" id="KC108852">
    <property type="protein sequence ID" value="AGC93542.1"/>
    <property type="molecule type" value="Viral_cRNA"/>
</dbReference>
<dbReference type="EMBL" id="KC108856">
    <property type="protein sequence ID" value="AGC93544.1"/>
    <property type="molecule type" value="Viral_cRNA"/>
</dbReference>
<dbReference type="EMBL" id="KC108866">
    <property type="protein sequence ID" value="AGC93549.1"/>
    <property type="molecule type" value="Viral_cRNA"/>
</dbReference>
<dbReference type="EMBL" id="KC108874">
    <property type="protein sequence ID" value="AGC93553.1"/>
    <property type="molecule type" value="Viral_cRNA"/>
</dbReference>
<dbReference type="EMBL" id="KC108878">
    <property type="protein sequence ID" value="AGC93555.1"/>
    <property type="molecule type" value="Viral_cRNA"/>
</dbReference>
<dbReference type="EMBL" id="KC108880">
    <property type="protein sequence ID" value="AGC93556.1"/>
    <property type="molecule type" value="Viral_cRNA"/>
</dbReference>
<dbReference type="EMBL" id="KC108882">
    <property type="protein sequence ID" value="AGC93557.1"/>
    <property type="molecule type" value="Viral_cRNA"/>
</dbReference>
<dbReference type="EMBL" id="KC108884">
    <property type="protein sequence ID" value="AGC93558.1"/>
    <property type="molecule type" value="Viral_cRNA"/>
</dbReference>
<dbReference type="EMBL" id="KC108886">
    <property type="protein sequence ID" value="AGC93559.1"/>
    <property type="molecule type" value="Viral_cRNA"/>
</dbReference>
<dbReference type="EMBL" id="HE649914">
    <property type="protein sequence ID" value="CCF55031.1"/>
    <property type="molecule type" value="Genomic_RNA"/>
</dbReference>
<dbReference type="PDB" id="3ZL9">
    <property type="method" value="X-ray"/>
    <property type="resolution" value="2.75 A"/>
    <property type="chains" value="A/B/C/D=1-233"/>
</dbReference>
<dbReference type="PDB" id="4IDU">
    <property type="method" value="X-ray"/>
    <property type="resolution" value="3.08 A"/>
    <property type="chains" value="A/B/C/D=1-233"/>
</dbReference>
<dbReference type="PDB" id="4IDX">
    <property type="method" value="X-ray"/>
    <property type="resolution" value="3.21 A"/>
    <property type="chains" value="A/B/C=1-233"/>
</dbReference>
<dbReference type="PDB" id="4JNG">
    <property type="method" value="X-ray"/>
    <property type="resolution" value="2.12 A"/>
    <property type="chains" value="A/B/C/D=1-233"/>
</dbReference>
<dbReference type="PDBsum" id="3ZL9"/>
<dbReference type="PDBsum" id="4IDU"/>
<dbReference type="PDBsum" id="4IDX"/>
<dbReference type="PDBsum" id="4JNG"/>
<dbReference type="SMR" id="H2AM13"/>
<dbReference type="EvolutionaryTrace" id="H2AM13"/>
<dbReference type="GO" id="GO:1990904">
    <property type="term" value="C:ribonucleoprotein complex"/>
    <property type="evidence" value="ECO:0007669"/>
    <property type="project" value="UniProtKB-KW"/>
</dbReference>
<dbReference type="GO" id="GO:0019013">
    <property type="term" value="C:viral nucleocapsid"/>
    <property type="evidence" value="ECO:0007669"/>
    <property type="project" value="UniProtKB-KW"/>
</dbReference>
<dbReference type="GO" id="GO:0003723">
    <property type="term" value="F:RNA binding"/>
    <property type="evidence" value="ECO:0007669"/>
    <property type="project" value="UniProtKB-KW"/>
</dbReference>
<dbReference type="Gene3D" id="1.20.142.20">
    <property type="match status" value="1"/>
</dbReference>
<dbReference type="Gene3D" id="1.10.472.180">
    <property type="entry name" value="Bunyavirus nucleocapsid (N) protein, C-terminal domain"/>
    <property type="match status" value="1"/>
</dbReference>
<dbReference type="InterPro" id="IPR001784">
    <property type="entry name" value="Bunya_nucleocap"/>
</dbReference>
<dbReference type="InterPro" id="IPR043011">
    <property type="entry name" value="Bunya_nucleocap_C"/>
</dbReference>
<dbReference type="InterPro" id="IPR043012">
    <property type="entry name" value="Bunya_nucleocap_N"/>
</dbReference>
<dbReference type="Pfam" id="PF00952">
    <property type="entry name" value="Bunya_nucleocap"/>
    <property type="match status" value="1"/>
</dbReference>
<dbReference type="PIRSF" id="PIRSF003947">
    <property type="entry name" value="N_OrthobunV"/>
    <property type="match status" value="1"/>
</dbReference>
<reference key="1">
    <citation type="journal article" date="2012" name="Emerg. Infect. Dis.">
        <title>Novel orthobunyavirus in cattle, europe, 2011.</title>
        <authorList>
            <person name="Hoffmann B."/>
            <person name="Scheuch M."/>
            <person name="Hoper D."/>
            <person name="Jungblut R."/>
            <person name="Holsteg M."/>
            <person name="Schirrmeier H."/>
            <person name="Eschbaumer M."/>
            <person name="Goller K.V."/>
            <person name="Wernike K."/>
            <person name="Fischer M."/>
            <person name="Breithaupt A."/>
            <person name="Mettenleiter T.C."/>
            <person name="Beer M."/>
        </authorList>
    </citation>
    <scope>NUCLEOTIDE SEQUENCE [GENOMIC RNA]</scope>
</reference>
<reference key="2">
    <citation type="submission" date="2012-01" db="EMBL/GenBank/DDBJ databases">
        <authorList>
            <person name="Hoeper D."/>
        </authorList>
    </citation>
    <scope>NUCLEOTIDE SEQUENCE [GENOMIC RNA]</scope>
</reference>
<reference key="3">
    <citation type="submission" date="2012-10" db="EMBL/GenBank/DDBJ databases">
        <title>Hot spot of mutation in the Schmallenberg virus M-segment detected in German field isolates.</title>
        <authorList>
            <person name="Fischer M."/>
            <person name="Hoffmann B."/>
            <person name="Goller K.V."/>
            <person name="Wernike K."/>
            <person name="Beer M."/>
        </authorList>
    </citation>
    <scope>NUCLEOTIDE SEQUENCE [GENOMIC RNA]</scope>
    <source>
        <strain>BH02/12-1</strain>
        <strain>BH148/12-9</strain>
        <strain>BH200/12-2</strain>
        <strain>BH248/12-1</strain>
        <strain>BH336/12-1</strain>
        <strain>BH336/12-3</strain>
        <strain>BH37/12-2</strain>
        <strain>BH619/12-1</strain>
        <strain>BH635/12-2</strain>
        <strain>BH652/12-1</strain>
        <strain>BH77/12-1</strain>
    </source>
</reference>
<reference key="4">
    <citation type="journal article" date="2013" name="PLoS Pathog.">
        <title>Schmallenberg virus pathogenesis, tropism and interaction with the innate immune system of the host.</title>
        <authorList>
            <person name="Varela M."/>
            <person name="Schnettler E."/>
            <person name="Caporale M."/>
            <person name="Murgia C."/>
            <person name="Barry G."/>
            <person name="McFarlane M."/>
            <person name="McGregor E."/>
            <person name="Piras I.M."/>
            <person name="Shaw A."/>
            <person name="Lamm C."/>
            <person name="Janowicz A."/>
            <person name="Beer M."/>
            <person name="Glass M."/>
            <person name="Herder V."/>
            <person name="Hahn K."/>
            <person name="Baumgartner W."/>
            <person name="Kohl A."/>
            <person name="Palmarini M."/>
        </authorList>
    </citation>
    <scope>NUCLEOTIDE SEQUENCE [GENOMIC RNA]</scope>
    <source>
        <strain>Germany</strain>
    </source>
</reference>
<reference evidence="7 8" key="5">
    <citation type="journal article" date="2013" name="J. Virol.">
        <title>Structure of Schmallenberg orthobunyavirus nucleoprotein suggests a novel mechanism of genome encapsidation.</title>
        <authorList>
            <person name="Dong H."/>
            <person name="Li P."/>
            <person name="Elliott R.M."/>
            <person name="Dong C."/>
        </authorList>
    </citation>
    <scope>X-RAY CRYSTALLOGRAPHY (3.08 ANGSTROMS)</scope>
    <scope>DOMAIN</scope>
    <scope>RNA-BINDING</scope>
    <scope>FUNCTION</scope>
    <scope>MUTAGENESIS OF ARG-41; LYS-48 AND LYS-51</scope>
    <scope>SUBUNIT</scope>
</reference>
<reference evidence="6" key="6">
    <citation type="journal article" date="2013" name="Nucleic Acids Res.">
        <title>Nucleocapsid protein structures from orthobunyaviruses reveal insight into ribonucleoprotein architecture and RNA polymerization.</title>
        <authorList>
            <person name="Ariza A."/>
            <person name="Tanner S.J."/>
            <person name="Walter C.T."/>
            <person name="Dent K.C."/>
            <person name="Shepherd D.A."/>
            <person name="Wu W."/>
            <person name="Matthews S.V."/>
            <person name="Hiscox J.A."/>
            <person name="Green T.J."/>
            <person name="Luo M."/>
            <person name="Elliott R.M."/>
            <person name="Fooks A.R."/>
            <person name="Ashcroft A.E."/>
            <person name="Stonehouse N.J."/>
            <person name="Ranson N.A."/>
            <person name="Barr J.N."/>
            <person name="Edwards T.A."/>
        </authorList>
    </citation>
    <scope>X-RAY CRYSTALLOGRAPHY (2.75 ANGSTROMS)</scope>
    <scope>SUBUNIT</scope>
    <scope>FUNCTION</scope>
</reference>
<reference evidence="9" key="7">
    <citation type="journal article" date="2013" name="RNA">
        <title>Crystal structure of Schmallenberg orthobunyavirus nucleoprotein-RNA complex reveals a novel RNA sequestration mechanism.</title>
        <authorList>
            <person name="Dong H."/>
            <person name="Li P."/>
            <person name="Bottcher B."/>
            <person name="Elliott R.M."/>
            <person name="Dong C."/>
        </authorList>
    </citation>
    <scope>X-RAY CRYSTALLOGRAPHY (2.12 ANGSTROMS) IN COMPLEX WITH RNA</scope>
    <scope>SUBUNIT</scope>
    <scope>FUNCTION</scope>
    <scope>RNA-BINDING</scope>
</reference>
<comment type="function">
    <text evidence="1 2 3 4 5">Encapsidates the genome, protecting it from nucleases (PubMed:23468499, PubMed:23595147, PubMed:23798666). The encapsidated genomic RNA is termed the nucleocapsid (NC) and serves as template for transcription and replication (Probable). The NC have a helical organization (By similarity).</text>
</comment>
<comment type="subunit">
    <text evidence="2 3 4">Homotetramer (PubMed:23468499, PubMed:23595147, PubMed:23798666). Binds the viral genomic RNA (PubMed:23468499, PubMed:23798666).</text>
</comment>
<comment type="subcellular location">
    <subcellularLocation>
        <location evidence="1">Virion</location>
    </subcellularLocation>
    <text evidence="5">Located inside the virion, complexed with the viral RNA.</text>
</comment>
<comment type="alternative products">
    <event type="alternative initiation"/>
    <isoform>
        <id>H2AM13-1</id>
        <name>N</name>
        <sequence type="displayed"/>
    </isoform>
    <isoform>
        <id>P0DXM9-1</id>
        <id>H2AM14-1</id>
        <name>NSS</name>
        <sequence type="external"/>
    </isoform>
</comment>
<comment type="domain">
    <text evidence="2">The N-terminus and C-terminus are involved in homooligomerization and play an essential role in viral RNA synthesis.</text>
</comment>
<comment type="similarity">
    <text evidence="5">Belongs to the orthobunyavirus nucleocapsid protein family.</text>
</comment>
<evidence type="ECO:0000250" key="1">
    <source>
        <dbReference type="UniProtKB" id="P16495"/>
    </source>
</evidence>
<evidence type="ECO:0000269" key="2">
    <source>
    </source>
</evidence>
<evidence type="ECO:0000269" key="3">
    <source>
    </source>
</evidence>
<evidence type="ECO:0000269" key="4">
    <source>
    </source>
</evidence>
<evidence type="ECO:0000305" key="5"/>
<evidence type="ECO:0007744" key="6">
    <source>
        <dbReference type="PDB" id="3ZL9"/>
    </source>
</evidence>
<evidence type="ECO:0007744" key="7">
    <source>
        <dbReference type="PDB" id="4IDU"/>
    </source>
</evidence>
<evidence type="ECO:0007744" key="8">
    <source>
        <dbReference type="PDB" id="4IDX"/>
    </source>
</evidence>
<evidence type="ECO:0007744" key="9">
    <source>
        <dbReference type="PDB" id="4JNG"/>
    </source>
</evidence>
<evidence type="ECO:0007829" key="10">
    <source>
        <dbReference type="PDB" id="4IDU"/>
    </source>
</evidence>
<evidence type="ECO:0007829" key="11">
    <source>
        <dbReference type="PDB" id="4JNG"/>
    </source>
</evidence>